<name>KPTN_MOUSE</name>
<keyword id="KW-0009">Actin-binding</keyword>
<keyword id="KW-0966">Cell projection</keyword>
<keyword id="KW-0458">Lysosome</keyword>
<keyword id="KW-0472">Membrane</keyword>
<keyword id="KW-1185">Reference proteome</keyword>
<proteinExistence type="evidence at transcript level"/>
<feature type="chain" id="PRO_0000239235" description="KICSTOR complex protein kaptin">
    <location>
        <begin position="1"/>
        <end position="430"/>
    </location>
</feature>
<feature type="region of interest" description="Disordered" evidence="3">
    <location>
        <begin position="410"/>
        <end position="430"/>
    </location>
</feature>
<feature type="compositionally biased region" description="Basic and acidic residues" evidence="3">
    <location>
        <begin position="420"/>
        <end position="430"/>
    </location>
</feature>
<accession>Q8VCX6</accession>
<gene>
    <name evidence="5" type="primary">Kptn</name>
</gene>
<comment type="function">
    <text evidence="2">As part of the KICSTOR complex functions in the amino acid-sensing branch of the TORC1 signaling pathway. Recruits, in an amino acid-independent manner, the GATOR1 complex to the lysosomal membranes and allows its interaction with GATOR2 and the RAG GTPases. Functions upstream of the RAG GTPases and is required to negatively regulate mTORC1 signaling in absence of amino acids. In absence of the KICSTOR complex mTORC1 is constitutively localized to the lysosome and activated. The KICSTOR complex is also probably involved in the regulation of mTORC1 by glucose.</text>
</comment>
<comment type="subunit">
    <text evidence="2">Part of the KICSTOR complex composed of KPTN, ITFG2, KICS2 and SZT2. SZT2 probably serves as a link between the other three proteins in the KICSTOR complex and mediates the direct interaction with the GATOR1 complex. May associate with F-actin filaments.</text>
</comment>
<comment type="subcellular location">
    <subcellularLocation>
        <location evidence="2">Lysosome membrane</location>
    </subcellularLocation>
    <subcellularLocation>
        <location evidence="2">Cell projection</location>
        <location evidence="2">Lamellipodium</location>
    </subcellularLocation>
    <subcellularLocation>
        <location evidence="1">Cell projection</location>
        <location evidence="1">Stereocilium</location>
    </subcellularLocation>
    <text evidence="2">Localization to lysosomes is amino acid-independent (By similarity). Colocalizes with F-actin (By similarity).</text>
</comment>
<organism>
    <name type="scientific">Mus musculus</name>
    <name type="common">Mouse</name>
    <dbReference type="NCBI Taxonomy" id="10090"/>
    <lineage>
        <taxon>Eukaryota</taxon>
        <taxon>Metazoa</taxon>
        <taxon>Chordata</taxon>
        <taxon>Craniata</taxon>
        <taxon>Vertebrata</taxon>
        <taxon>Euteleostomi</taxon>
        <taxon>Mammalia</taxon>
        <taxon>Eutheria</taxon>
        <taxon>Euarchontoglires</taxon>
        <taxon>Glires</taxon>
        <taxon>Rodentia</taxon>
        <taxon>Myomorpha</taxon>
        <taxon>Muroidea</taxon>
        <taxon>Muridae</taxon>
        <taxon>Murinae</taxon>
        <taxon>Mus</taxon>
        <taxon>Mus</taxon>
    </lineage>
</organism>
<reference key="1">
    <citation type="journal article" date="2004" name="Genome Res.">
        <title>The status, quality, and expansion of the NIH full-length cDNA project: the Mammalian Gene Collection (MGC).</title>
        <authorList>
            <consortium name="The MGC Project Team"/>
        </authorList>
    </citation>
    <scope>NUCLEOTIDE SEQUENCE [LARGE SCALE MRNA]</scope>
    <source>
        <strain>FVB/N</strain>
        <tissue>Liver</tissue>
    </source>
</reference>
<dbReference type="EMBL" id="BC018316">
    <property type="protein sequence ID" value="AAH18316.1"/>
    <property type="molecule type" value="mRNA"/>
</dbReference>
<dbReference type="CCDS" id="CCDS20844.1"/>
<dbReference type="FunCoup" id="Q8VCX6">
    <property type="interactions" value="1"/>
</dbReference>
<dbReference type="STRING" id="10090.ENSMUSP00000006178"/>
<dbReference type="GlyGen" id="Q8VCX6">
    <property type="glycosylation" value="1 site, 1 O-linked glycan (1 site)"/>
</dbReference>
<dbReference type="PhosphoSitePlus" id="Q8VCX6"/>
<dbReference type="PaxDb" id="10090-ENSMUSP00000006178"/>
<dbReference type="ProteomicsDB" id="264795"/>
<dbReference type="Pumba" id="Q8VCX6"/>
<dbReference type="AGR" id="MGI:1890380"/>
<dbReference type="MGI" id="MGI:1890380">
    <property type="gene designation" value="Kptn"/>
</dbReference>
<dbReference type="eggNOG" id="ENOG502QTF2">
    <property type="taxonomic scope" value="Eukaryota"/>
</dbReference>
<dbReference type="InParanoid" id="Q8VCX6"/>
<dbReference type="PhylomeDB" id="Q8VCX6"/>
<dbReference type="Reactome" id="R-MMU-9639288">
    <property type="pathway name" value="Amino acids regulate mTORC1"/>
</dbReference>
<dbReference type="ChiTaRS" id="Kptn">
    <property type="organism name" value="mouse"/>
</dbReference>
<dbReference type="PRO" id="PR:Q8VCX6"/>
<dbReference type="Proteomes" id="UP000000589">
    <property type="component" value="Unplaced"/>
</dbReference>
<dbReference type="RNAct" id="Q8VCX6">
    <property type="molecule type" value="protein"/>
</dbReference>
<dbReference type="GO" id="GO:0015629">
    <property type="term" value="C:actin cytoskeleton"/>
    <property type="evidence" value="ECO:0007669"/>
    <property type="project" value="InterPro"/>
</dbReference>
<dbReference type="GO" id="GO:0140007">
    <property type="term" value="C:KICSTOR complex"/>
    <property type="evidence" value="ECO:0000250"/>
    <property type="project" value="UniProtKB"/>
</dbReference>
<dbReference type="GO" id="GO:0030027">
    <property type="term" value="C:lamellipodium"/>
    <property type="evidence" value="ECO:0000250"/>
    <property type="project" value="UniProtKB"/>
</dbReference>
<dbReference type="GO" id="GO:0005765">
    <property type="term" value="C:lysosomal membrane"/>
    <property type="evidence" value="ECO:0007669"/>
    <property type="project" value="UniProtKB-SubCell"/>
</dbReference>
<dbReference type="GO" id="GO:0032420">
    <property type="term" value="C:stereocilium"/>
    <property type="evidence" value="ECO:0000250"/>
    <property type="project" value="UniProtKB"/>
</dbReference>
<dbReference type="GO" id="GO:0051015">
    <property type="term" value="F:actin filament binding"/>
    <property type="evidence" value="ECO:0000250"/>
    <property type="project" value="UniProtKB"/>
</dbReference>
<dbReference type="GO" id="GO:0007015">
    <property type="term" value="P:actin filament organization"/>
    <property type="evidence" value="ECO:0007669"/>
    <property type="project" value="InterPro"/>
</dbReference>
<dbReference type="GO" id="GO:0034198">
    <property type="term" value="P:cellular response to amino acid starvation"/>
    <property type="evidence" value="ECO:0000250"/>
    <property type="project" value="UniProtKB"/>
</dbReference>
<dbReference type="GO" id="GO:0042149">
    <property type="term" value="P:cellular response to glucose starvation"/>
    <property type="evidence" value="ECO:0000250"/>
    <property type="project" value="UniProtKB"/>
</dbReference>
<dbReference type="GO" id="GO:1904262">
    <property type="term" value="P:negative regulation of TORC1 signaling"/>
    <property type="evidence" value="ECO:0000250"/>
    <property type="project" value="UniProtKB"/>
</dbReference>
<dbReference type="GO" id="GO:0061462">
    <property type="term" value="P:protein localization to lysosome"/>
    <property type="evidence" value="ECO:0000250"/>
    <property type="project" value="UniProtKB"/>
</dbReference>
<dbReference type="InterPro" id="IPR028994">
    <property type="entry name" value="Integrin_alpha_N"/>
</dbReference>
<dbReference type="InterPro" id="IPR029982">
    <property type="entry name" value="Kptn"/>
</dbReference>
<dbReference type="PANTHER" id="PTHR15435">
    <property type="entry name" value="KICSTOR COMPLEX PROTEIN KAPTIN"/>
    <property type="match status" value="1"/>
</dbReference>
<dbReference type="PANTHER" id="PTHR15435:SF2">
    <property type="entry name" value="KICSTOR COMPLEX PROTEIN KAPTIN"/>
    <property type="match status" value="1"/>
</dbReference>
<dbReference type="SUPFAM" id="SSF69318">
    <property type="entry name" value="Integrin alpha N-terminal domain"/>
    <property type="match status" value="1"/>
</dbReference>
<evidence type="ECO:0000250" key="1">
    <source>
        <dbReference type="UniProtKB" id="A0A1D5PJB7"/>
    </source>
</evidence>
<evidence type="ECO:0000250" key="2">
    <source>
        <dbReference type="UniProtKB" id="Q9Y664"/>
    </source>
</evidence>
<evidence type="ECO:0000256" key="3">
    <source>
        <dbReference type="SAM" id="MobiDB-lite"/>
    </source>
</evidence>
<evidence type="ECO:0000305" key="4"/>
<evidence type="ECO:0000312" key="5">
    <source>
        <dbReference type="MGI" id="MGI:1890380"/>
    </source>
</evidence>
<protein>
    <recommendedName>
        <fullName evidence="4">KICSTOR complex protein kaptin</fullName>
    </recommendedName>
</protein>
<sequence>MGEAAVAEGPCPLLEDSFTRFSSQSNVYGLAGGADGRGELLAATLKGKVLGFRYQDLRQKIRPVAKELQFNYIPVDAEIVSIDTFNKSPPKRGLVVGITFIKDSGDKGSPFLNIYCDYEPGSEYNLDSIAESCLNLELQFTPFQLCHAEVQVGDQLETVFLLSGNDPAIHLYKENEGLHQFEEQPVENLFPELTNLTSSVLWLDVHNLPGSSQRLSALGCQSGYVRVAHVDQKNQEILQTWTIQQDGPISRVIVFSLSASEATQDSPQQEGYSLLVASMLEPAVVYWDLLNKGLDDQLLLPGSDQFDSVLCGLVTDVDLDGQLEVLVATYGQELLCYKYRGLPEDSRGFRLLWRRSFASPLLAMAHVDLTGDGLRELAVISLKGVHILQHSLIQASELVLTRLRHQVEQRKHQQGLGDRVGPRPVEHPAS</sequence>